<dbReference type="EMBL" id="GT029007">
    <property type="status" value="NOT_ANNOTATED_CDS"/>
    <property type="molecule type" value="mRNA"/>
</dbReference>
<dbReference type="GO" id="GO:0005576">
    <property type="term" value="C:extracellular region"/>
    <property type="evidence" value="ECO:0007669"/>
    <property type="project" value="UniProtKB-SubCell"/>
</dbReference>
<accession>P0CI95</accession>
<comment type="subcellular location">
    <subcellularLocation>
        <location evidence="1">Secreted</location>
    </subcellularLocation>
</comment>
<comment type="tissue specificity">
    <text evidence="3">Expressed by the venom gland.</text>
</comment>
<comment type="similarity">
    <text evidence="3">Belongs to the non-disulfide-bridged peptide (NDBP) superfamily.</text>
</comment>
<protein>
    <recommendedName>
        <fullName>Glycine-rich protein</fullName>
    </recommendedName>
</protein>
<reference key="1">
    <citation type="journal article" date="2010" name="BMC Genomics">
        <title>Comparative venom gland transcriptome analysis of the scorpion Lychas mucronatus reveals intraspecific toxic gene diversity and new venomous components.</title>
        <authorList>
            <person name="Zhao R."/>
            <person name="Ma Y."/>
            <person name="He Y."/>
            <person name="Di Z."/>
            <person name="Wu Y.-L."/>
            <person name="Cao Z.-J."/>
            <person name="Li W.-X."/>
        </authorList>
    </citation>
    <scope>NUCLEOTIDE SEQUENCE [MRNA]</scope>
    <source>
        <strain>Yunnan</strain>
        <tissue>Venom gland</tissue>
    </source>
</reference>
<sequence>MKSMIAAILFALVATSLAGYLGYAGYGGPYGGYGAFGFRGVPVGRAVAYSSSIRHPGYGYGLGLGYGGLGYGLGYGGYGGYGLGYGYGGYGLGLGHGLGLGKVW</sequence>
<proteinExistence type="inferred from homology"/>
<organism>
    <name type="scientific">Lychas mucronatus</name>
    <name type="common">Chinese swimming scorpion</name>
    <dbReference type="NCBI Taxonomy" id="172552"/>
    <lineage>
        <taxon>Eukaryota</taxon>
        <taxon>Metazoa</taxon>
        <taxon>Ecdysozoa</taxon>
        <taxon>Arthropoda</taxon>
        <taxon>Chelicerata</taxon>
        <taxon>Arachnida</taxon>
        <taxon>Scorpiones</taxon>
        <taxon>Buthida</taxon>
        <taxon>Buthoidea</taxon>
        <taxon>Buthidae</taxon>
        <taxon>Lychas</taxon>
    </lineage>
</organism>
<feature type="signal peptide" evidence="2">
    <location>
        <begin position="1"/>
        <end position="18"/>
    </location>
</feature>
<feature type="chain" id="PRO_0000403875" description="Glycine-rich protein">
    <location>
        <begin position="19"/>
        <end position="104"/>
    </location>
</feature>
<keyword id="KW-0964">Secreted</keyword>
<keyword id="KW-0732">Signal</keyword>
<name>NDBG2_LYCMC</name>
<evidence type="ECO:0000250" key="1"/>
<evidence type="ECO:0000255" key="2"/>
<evidence type="ECO:0000305" key="3"/>